<accession>P03729</accession>
<dbReference type="EC" id="3.4.-.-"/>
<dbReference type="EMBL" id="J02459">
    <property type="protein sequence ID" value="AAA96551.1"/>
    <property type="molecule type" value="Genomic_DNA"/>
</dbReference>
<dbReference type="PIR" id="H43009">
    <property type="entry name" value="TJBPKL"/>
</dbReference>
<dbReference type="RefSeq" id="NP_040598.1">
    <property type="nucleotide sequence ID" value="NC_001416.1"/>
</dbReference>
<dbReference type="SMR" id="P03729"/>
<dbReference type="IntAct" id="P03729">
    <property type="interactions" value="2"/>
</dbReference>
<dbReference type="GeneID" id="2703514"/>
<dbReference type="KEGG" id="vg:2703514"/>
<dbReference type="Proteomes" id="UP000001711">
    <property type="component" value="Genome"/>
</dbReference>
<dbReference type="GO" id="GO:0030430">
    <property type="term" value="C:host cell cytoplasm"/>
    <property type="evidence" value="ECO:0007669"/>
    <property type="project" value="UniProtKB-SubCell"/>
</dbReference>
<dbReference type="GO" id="GO:0008234">
    <property type="term" value="F:cysteine-type peptidase activity"/>
    <property type="evidence" value="ECO:0007669"/>
    <property type="project" value="UniProtKB-KW"/>
</dbReference>
<dbReference type="GO" id="GO:0008235">
    <property type="term" value="F:metalloexopeptidase activity"/>
    <property type="evidence" value="ECO:0007669"/>
    <property type="project" value="TreeGrafter"/>
</dbReference>
<dbReference type="GO" id="GO:0008270">
    <property type="term" value="F:zinc ion binding"/>
    <property type="evidence" value="ECO:0007669"/>
    <property type="project" value="TreeGrafter"/>
</dbReference>
<dbReference type="GO" id="GO:0006508">
    <property type="term" value="P:proteolysis"/>
    <property type="evidence" value="ECO:0007669"/>
    <property type="project" value="UniProtKB-KW"/>
</dbReference>
<dbReference type="GO" id="GO:0001897">
    <property type="term" value="P:symbiont-mediated cytolysis of host cell"/>
    <property type="evidence" value="ECO:0007669"/>
    <property type="project" value="UniProtKB-ARBA"/>
</dbReference>
<dbReference type="GO" id="GO:0098003">
    <property type="term" value="P:viral tail assembly"/>
    <property type="evidence" value="ECO:0007669"/>
    <property type="project" value="UniProtKB-KW"/>
</dbReference>
<dbReference type="CDD" id="cd08073">
    <property type="entry name" value="MPN_NLPC_P60"/>
    <property type="match status" value="1"/>
</dbReference>
<dbReference type="Gene3D" id="3.90.1720.10">
    <property type="entry name" value="endopeptidase domain like (from Nostoc punctiforme)"/>
    <property type="match status" value="1"/>
</dbReference>
<dbReference type="InterPro" id="IPR037518">
    <property type="entry name" value="MPN"/>
</dbReference>
<dbReference type="InterPro" id="IPR000064">
    <property type="entry name" value="NLP_P60_dom"/>
</dbReference>
<dbReference type="InterPro" id="IPR038765">
    <property type="entry name" value="Papain-like_cys_pep_sf"/>
</dbReference>
<dbReference type="InterPro" id="IPR051929">
    <property type="entry name" value="VirAsm_ModProt"/>
</dbReference>
<dbReference type="PANTHER" id="PTHR34858">
    <property type="entry name" value="CYSO-CYSTEINE PEPTIDASE"/>
    <property type="match status" value="1"/>
</dbReference>
<dbReference type="PANTHER" id="PTHR34858:SF1">
    <property type="entry name" value="CYSO-CYSTEINE PEPTIDASE"/>
    <property type="match status" value="1"/>
</dbReference>
<dbReference type="Pfam" id="PF00877">
    <property type="entry name" value="NLPC_P60"/>
    <property type="match status" value="1"/>
</dbReference>
<dbReference type="SUPFAM" id="SSF54001">
    <property type="entry name" value="Cysteine proteinases"/>
    <property type="match status" value="1"/>
</dbReference>
<dbReference type="SUPFAM" id="SSF102712">
    <property type="entry name" value="JAB1/MPN domain"/>
    <property type="match status" value="1"/>
</dbReference>
<dbReference type="PROSITE" id="PS50249">
    <property type="entry name" value="MPN"/>
    <property type="match status" value="1"/>
</dbReference>
<dbReference type="PROSITE" id="PS51935">
    <property type="entry name" value="NLPC_P60"/>
    <property type="match status" value="1"/>
</dbReference>
<sequence length="199" mass="23011">MSPEDWLQAEMQGEIVALVHSHPGGLPWLSEADRRLQVQSDLPWWLVCRGTIHKFRCVPHLTGRRFEHGVTDCYTLFRDAYHLAGIEMPDFHREDDWWRNGQNLYLDNLEATGLYQVPLSAAQPGDVLLCCFGSSVPNHAAIYCGDGELLHHIPEQLSKRERYTDKWQRRTHSLWRHRAWRASAFTGIYNDLVAASTFV</sequence>
<keyword id="KW-1035">Host cytoplasm</keyword>
<keyword id="KW-0378">Hydrolase</keyword>
<keyword id="KW-0426">Late protein</keyword>
<keyword id="KW-0479">Metal-binding</keyword>
<keyword id="KW-0482">Metalloprotease</keyword>
<keyword id="KW-0645">Protease</keyword>
<keyword id="KW-1185">Reference proteome</keyword>
<keyword id="KW-0788">Thiol protease</keyword>
<keyword id="KW-1188">Viral release from host cell</keyword>
<keyword id="KW-1245">Viral tail assembly</keyword>
<keyword id="KW-0862">Zinc</keyword>
<protein>
    <recommendedName>
        <fullName>Tail tip assembly protein K</fullName>
    </recommendedName>
    <alternativeName>
        <fullName>Probable endopeptidase</fullName>
        <ecNumber>3.4.-.-</ecNumber>
    </alternativeName>
    <alternativeName>
        <fullName>Tail assembly protein K</fullName>
    </alternativeName>
</protein>
<gene>
    <name type="primary">K</name>
    <name type="ordered locus">lambdap19</name>
</gene>
<organism>
    <name type="scientific">Escherichia phage lambda</name>
    <name type="common">Bacteriophage lambda</name>
    <dbReference type="NCBI Taxonomy" id="2681611"/>
    <lineage>
        <taxon>Viruses</taxon>
        <taxon>Duplodnaviria</taxon>
        <taxon>Heunggongvirae</taxon>
        <taxon>Uroviricota</taxon>
        <taxon>Caudoviricetes</taxon>
        <taxon>Lambdavirus</taxon>
        <taxon>Lambdavirus lambda</taxon>
    </lineage>
</organism>
<evidence type="ECO:0000255" key="1">
    <source>
        <dbReference type="PROSITE-ProRule" id="PRU01182"/>
    </source>
</evidence>
<evidence type="ECO:0000255" key="2">
    <source>
        <dbReference type="PROSITE-ProRule" id="PRU01284"/>
    </source>
</evidence>
<evidence type="ECO:0000269" key="3">
    <source>
    </source>
</evidence>
<evidence type="ECO:0000305" key="4"/>
<organismHost>
    <name type="scientific">Escherichia coli</name>
    <dbReference type="NCBI Taxonomy" id="562"/>
</organismHost>
<feature type="chain" id="PRO_0000109872" description="Tail tip assembly protein K">
    <location>
        <begin position="1"/>
        <end position="199"/>
    </location>
</feature>
<feature type="domain" description="MPN" evidence="1">
    <location>
        <begin position="1"/>
        <end position="77"/>
    </location>
</feature>
<feature type="domain" description="NlpC/P60" evidence="2">
    <location>
        <begin position="40"/>
        <end position="186"/>
    </location>
</feature>
<feature type="short sequence motif" description="JAMM motif" evidence="1">
    <location>
        <begin position="20"/>
        <end position="33"/>
    </location>
</feature>
<feature type="active site" description="Nucleophile" evidence="2">
    <location>
        <position position="73"/>
    </location>
</feature>
<feature type="active site" description="Proton acceptor" evidence="2">
    <location>
        <position position="139"/>
    </location>
</feature>
<feature type="active site" evidence="2">
    <location>
        <position position="151"/>
    </location>
</feature>
<feature type="binding site" evidence="1">
    <location>
        <position position="20"/>
    </location>
    <ligand>
        <name>Zn(2+)</name>
        <dbReference type="ChEBI" id="CHEBI:29105"/>
        <note>catalytic</note>
    </ligand>
</feature>
<feature type="binding site" evidence="1">
    <location>
        <position position="22"/>
    </location>
    <ligand>
        <name>Zn(2+)</name>
        <dbReference type="ChEBI" id="CHEBI:29105"/>
        <note>catalytic</note>
    </ligand>
</feature>
<feature type="binding site" evidence="1">
    <location>
        <position position="33"/>
    </location>
    <ligand>
        <name>Zn(2+)</name>
        <dbReference type="ChEBI" id="CHEBI:29105"/>
        <note>catalytic</note>
    </ligand>
</feature>
<reference key="1">
    <citation type="journal article" date="1982" name="J. Mol. Biol.">
        <title>Nucleotide sequence of bacteriophage lambda DNA.</title>
        <authorList>
            <person name="Sanger F."/>
            <person name="Coulson A.R."/>
            <person name="Hong G.F."/>
            <person name="Hill D.F."/>
            <person name="Petersen G.B."/>
        </authorList>
    </citation>
    <scope>NUCLEOTIDE SEQUENCE [LARGE SCALE GENOMIC DNA]</scope>
</reference>
<reference key="2">
    <citation type="journal article" date="1976" name="J. Mol. Biol.">
        <title>Morphogenesis of bacteriophage lambda tail. Polymorphism in the assembly of the major tail protein.</title>
        <authorList>
            <person name="Katsura I."/>
        </authorList>
    </citation>
    <scope>FUNCTION</scope>
</reference>
<comment type="function">
    <text evidence="3">Plays a role in tail tip complex assembly. The tail tip complex is assembled successively with three tail tip proteins J, one tail tip protein I, one tail tip protein L and one tail tip protein K. The tail tip complex interacts with tail measure protein to initiate tail tube assembly. The formation of the tail tip complex is completed by the addition of tail tip protein M, which is followed by tail tube polymerization. May be excluded form tail tip during maturation and would be absent from virions. May be involved in tail measure protein processing.</text>
</comment>
<comment type="subcellular location">
    <subcellularLocation>
        <location>Host cytoplasm</location>
    </subcellularLocation>
</comment>
<comment type="similarity">
    <text evidence="2 4">Belongs to the peptidase C40 family.</text>
</comment>
<comment type="caution">
    <text evidence="4">It is uncertain whether Met-1 or Met-11 is the initiator.</text>
</comment>
<name>TIPK_LAMBD</name>
<proteinExistence type="inferred from homology"/>